<keyword id="KW-0963">Cytoplasm</keyword>
<keyword id="KW-0648">Protein biosynthesis</keyword>
<organism>
    <name type="scientific">Leptospira borgpetersenii serovar Hardjo-bovis (strain JB197)</name>
    <dbReference type="NCBI Taxonomy" id="355277"/>
    <lineage>
        <taxon>Bacteria</taxon>
        <taxon>Pseudomonadati</taxon>
        <taxon>Spirochaetota</taxon>
        <taxon>Spirochaetia</taxon>
        <taxon>Leptospirales</taxon>
        <taxon>Leptospiraceae</taxon>
        <taxon>Leptospira</taxon>
    </lineage>
</organism>
<reference key="1">
    <citation type="journal article" date="2006" name="Proc. Natl. Acad. Sci. U.S.A.">
        <title>Genome reduction in Leptospira borgpetersenii reflects limited transmission potential.</title>
        <authorList>
            <person name="Bulach D.M."/>
            <person name="Zuerner R.L."/>
            <person name="Wilson P."/>
            <person name="Seemann T."/>
            <person name="McGrath A."/>
            <person name="Cullen P.A."/>
            <person name="Davis J."/>
            <person name="Johnson M."/>
            <person name="Kuczek E."/>
            <person name="Alt D.P."/>
            <person name="Peterson-Burch B."/>
            <person name="Coppel R.L."/>
            <person name="Rood J.I."/>
            <person name="Davies J.K."/>
            <person name="Adler B."/>
        </authorList>
    </citation>
    <scope>NUCLEOTIDE SEQUENCE [LARGE SCALE GENOMIC DNA]</scope>
    <source>
        <strain>JB197</strain>
    </source>
</reference>
<feature type="chain" id="PRO_1000003190" description="Ribosome-recycling factor">
    <location>
        <begin position="1"/>
        <end position="184"/>
    </location>
</feature>
<evidence type="ECO:0000255" key="1">
    <source>
        <dbReference type="HAMAP-Rule" id="MF_00040"/>
    </source>
</evidence>
<protein>
    <recommendedName>
        <fullName evidence="1">Ribosome-recycling factor</fullName>
        <shortName evidence="1">RRF</shortName>
    </recommendedName>
    <alternativeName>
        <fullName evidence="1">Ribosome-releasing factor</fullName>
    </alternativeName>
</protein>
<dbReference type="EMBL" id="CP000350">
    <property type="protein sequence ID" value="ABJ75551.1"/>
    <property type="molecule type" value="Genomic_DNA"/>
</dbReference>
<dbReference type="RefSeq" id="WP_002727297.1">
    <property type="nucleotide sequence ID" value="NC_008510.1"/>
</dbReference>
<dbReference type="SMR" id="Q04U69"/>
<dbReference type="GeneID" id="61173532"/>
<dbReference type="KEGG" id="lbj:LBJ_0907"/>
<dbReference type="HOGENOM" id="CLU_073981_2_0_12"/>
<dbReference type="Proteomes" id="UP000000656">
    <property type="component" value="Chromosome 1"/>
</dbReference>
<dbReference type="GO" id="GO:0005737">
    <property type="term" value="C:cytoplasm"/>
    <property type="evidence" value="ECO:0007669"/>
    <property type="project" value="UniProtKB-SubCell"/>
</dbReference>
<dbReference type="GO" id="GO:0043023">
    <property type="term" value="F:ribosomal large subunit binding"/>
    <property type="evidence" value="ECO:0007669"/>
    <property type="project" value="TreeGrafter"/>
</dbReference>
<dbReference type="GO" id="GO:0006415">
    <property type="term" value="P:translational termination"/>
    <property type="evidence" value="ECO:0007669"/>
    <property type="project" value="UniProtKB-UniRule"/>
</dbReference>
<dbReference type="CDD" id="cd00520">
    <property type="entry name" value="RRF"/>
    <property type="match status" value="1"/>
</dbReference>
<dbReference type="FunFam" id="1.10.132.20:FF:000001">
    <property type="entry name" value="Ribosome-recycling factor"/>
    <property type="match status" value="1"/>
</dbReference>
<dbReference type="FunFam" id="3.30.1360.40:FF:000001">
    <property type="entry name" value="Ribosome-recycling factor"/>
    <property type="match status" value="1"/>
</dbReference>
<dbReference type="Gene3D" id="3.30.1360.40">
    <property type="match status" value="1"/>
</dbReference>
<dbReference type="Gene3D" id="1.10.132.20">
    <property type="entry name" value="Ribosome-recycling factor"/>
    <property type="match status" value="1"/>
</dbReference>
<dbReference type="HAMAP" id="MF_00040">
    <property type="entry name" value="RRF"/>
    <property type="match status" value="1"/>
</dbReference>
<dbReference type="InterPro" id="IPR002661">
    <property type="entry name" value="Ribosome_recyc_fac"/>
</dbReference>
<dbReference type="InterPro" id="IPR023584">
    <property type="entry name" value="Ribosome_recyc_fac_dom"/>
</dbReference>
<dbReference type="InterPro" id="IPR036191">
    <property type="entry name" value="RRF_sf"/>
</dbReference>
<dbReference type="NCBIfam" id="TIGR00496">
    <property type="entry name" value="frr"/>
    <property type="match status" value="1"/>
</dbReference>
<dbReference type="PANTHER" id="PTHR20982:SF3">
    <property type="entry name" value="MITOCHONDRIAL RIBOSOME RECYCLING FACTOR PSEUDO 1"/>
    <property type="match status" value="1"/>
</dbReference>
<dbReference type="PANTHER" id="PTHR20982">
    <property type="entry name" value="RIBOSOME RECYCLING FACTOR"/>
    <property type="match status" value="1"/>
</dbReference>
<dbReference type="Pfam" id="PF01765">
    <property type="entry name" value="RRF"/>
    <property type="match status" value="1"/>
</dbReference>
<dbReference type="SUPFAM" id="SSF55194">
    <property type="entry name" value="Ribosome recycling factor, RRF"/>
    <property type="match status" value="1"/>
</dbReference>
<proteinExistence type="inferred from homology"/>
<name>RRF_LEPBJ</name>
<accession>Q04U69</accession>
<sequence length="184" mass="20641">MASEEIISGMKTKMDKTIDLVKKDFGTVRTGRANPSLVEDIRVDYYGTLTPINQLGNISVPEPRMLVISPYDKGIMKDIEKAIQASGLGLQPSNDGVVIRIIIPELTGERRKELAKIVKSKSEEKKVAIRNIRRDAMEDLKKHTEGLSQDEIKTIQDRIQKTTDSYIDKISALTAEKEKEITTI</sequence>
<gene>
    <name evidence="1" type="primary">frr</name>
    <name type="ordered locus">LBJ_0907</name>
</gene>
<comment type="function">
    <text evidence="1">Responsible for the release of ribosomes from messenger RNA at the termination of protein biosynthesis. May increase the efficiency of translation by recycling ribosomes from one round of translation to another.</text>
</comment>
<comment type="subcellular location">
    <subcellularLocation>
        <location evidence="1">Cytoplasm</location>
    </subcellularLocation>
</comment>
<comment type="similarity">
    <text evidence="1">Belongs to the RRF family.</text>
</comment>